<accession>P43497</accession>
<accession>D6VXJ1</accession>
<gene>
    <name type="primary">CWP2</name>
    <name type="synonym">LPR1</name>
    <name type="ordered locus">YKL096W-A</name>
    <name type="ORF">YKL096BW</name>
    <name type="ORF">YKL444</name>
</gene>
<evidence type="ECO:0000250" key="1"/>
<evidence type="ECO:0000255" key="2"/>
<evidence type="ECO:0000256" key="3">
    <source>
        <dbReference type="SAM" id="MobiDB-lite"/>
    </source>
</evidence>
<evidence type="ECO:0000269" key="4">
    <source>
    </source>
</evidence>
<evidence type="ECO:0000269" key="5">
    <source>
    </source>
</evidence>
<evidence type="ECO:0000269" key="6">
    <source>
    </source>
</evidence>
<evidence type="ECO:0000305" key="7"/>
<proteinExistence type="evidence at protein level"/>
<feature type="signal peptide" evidence="6">
    <location>
        <begin position="1"/>
        <end position="20"/>
    </location>
</feature>
<feature type="chain" id="PRO_0000033252" description="Cell wall protein CWP2">
    <location>
        <begin position="21"/>
        <end position="71"/>
    </location>
</feature>
<feature type="propeptide" id="PRO_0000033253" description="Removed in mature form" evidence="2">
    <location>
        <begin position="72"/>
        <end position="92"/>
    </location>
</feature>
<feature type="repeat" description="PIR1/2/3">
    <location>
        <begin position="24"/>
        <end position="37"/>
    </location>
</feature>
<feature type="region of interest" description="Disordered" evidence="3">
    <location>
        <begin position="41"/>
        <end position="60"/>
    </location>
</feature>
<feature type="site" description="Covalent attachment to cell wall glycan" evidence="1">
    <location>
        <position position="33"/>
    </location>
</feature>
<feature type="lipid moiety-binding region" description="GPI-anchor amidated asparagine" evidence="2">
    <location>
        <position position="71"/>
    </location>
</feature>
<sequence length="92" mass="8911">MQFSTVASVAFVALANFVAAESAAAISQITDGQIQATTTATTEATTTAAPSSTVETVSPSSTETISQQTENGAAKAAVGMGAGALAAAAMLL</sequence>
<dbReference type="EMBL" id="U02299">
    <property type="protein sequence ID" value="AAA58697.1"/>
    <property type="molecule type" value="Genomic_DNA"/>
</dbReference>
<dbReference type="EMBL" id="X71133">
    <property type="status" value="NOT_ANNOTATED_CDS"/>
    <property type="molecule type" value="Genomic_DNA"/>
</dbReference>
<dbReference type="EMBL" id="Z28096">
    <property type="protein sequence ID" value="CAA81935.1"/>
    <property type="molecule type" value="Genomic_DNA"/>
</dbReference>
<dbReference type="EMBL" id="Z28097">
    <property type="protein sequence ID" value="CAA81937.1"/>
    <property type="molecule type" value="Genomic_DNA"/>
</dbReference>
<dbReference type="EMBL" id="AY558351">
    <property type="protein sequence ID" value="AAS56677.1"/>
    <property type="molecule type" value="Genomic_DNA"/>
</dbReference>
<dbReference type="EMBL" id="BK006944">
    <property type="protein sequence ID" value="DAA09061.1"/>
    <property type="molecule type" value="Genomic_DNA"/>
</dbReference>
<dbReference type="PIR" id="S39089">
    <property type="entry name" value="S39089"/>
</dbReference>
<dbReference type="RefSeq" id="NP_012826.1">
    <property type="nucleotide sequence ID" value="NM_001180025.1"/>
</dbReference>
<dbReference type="BioGRID" id="34036">
    <property type="interactions" value="105"/>
</dbReference>
<dbReference type="FunCoup" id="P43497">
    <property type="interactions" value="119"/>
</dbReference>
<dbReference type="IntAct" id="P43497">
    <property type="interactions" value="4"/>
</dbReference>
<dbReference type="MINT" id="P43497"/>
<dbReference type="STRING" id="4932.YKL096W-A"/>
<dbReference type="PaxDb" id="4932-YKL096W-A"/>
<dbReference type="PeptideAtlas" id="P43497"/>
<dbReference type="EnsemblFungi" id="YKL096W-A_mRNA">
    <property type="protein sequence ID" value="YKL096W-A"/>
    <property type="gene ID" value="YKL096W-A"/>
</dbReference>
<dbReference type="GeneID" id="853765"/>
<dbReference type="KEGG" id="sce:YKL096W-A"/>
<dbReference type="AGR" id="SGD:S000001956"/>
<dbReference type="SGD" id="S000001956">
    <property type="gene designation" value="CWP2"/>
</dbReference>
<dbReference type="VEuPathDB" id="FungiDB:YKL096W-A"/>
<dbReference type="eggNOG" id="ENOG502RQ57">
    <property type="taxonomic scope" value="Eukaryota"/>
</dbReference>
<dbReference type="HOGENOM" id="CLU_181669_0_0_1"/>
<dbReference type="InParanoid" id="P43497"/>
<dbReference type="BioCyc" id="YEAST:G3O-32069-MONOMER"/>
<dbReference type="BioGRID-ORCS" id="853765">
    <property type="hits" value="5 hits in 10 CRISPR screens"/>
</dbReference>
<dbReference type="ChiTaRS" id="CWP2">
    <property type="organism name" value="yeast"/>
</dbReference>
<dbReference type="PRO" id="PR:P43497"/>
<dbReference type="Proteomes" id="UP000002311">
    <property type="component" value="Chromosome XI"/>
</dbReference>
<dbReference type="RNAct" id="P43497">
    <property type="molecule type" value="protein"/>
</dbReference>
<dbReference type="GO" id="GO:0005829">
    <property type="term" value="C:cytosol"/>
    <property type="evidence" value="ECO:0007005"/>
    <property type="project" value="SGD"/>
</dbReference>
<dbReference type="GO" id="GO:0005576">
    <property type="term" value="C:extracellular region"/>
    <property type="evidence" value="ECO:0007669"/>
    <property type="project" value="UniProtKB-KW"/>
</dbReference>
<dbReference type="GO" id="GO:0009277">
    <property type="term" value="C:fungal-type cell wall"/>
    <property type="evidence" value="ECO:0000314"/>
    <property type="project" value="SGD"/>
</dbReference>
<dbReference type="GO" id="GO:0098552">
    <property type="term" value="C:side of membrane"/>
    <property type="evidence" value="ECO:0007669"/>
    <property type="project" value="UniProtKB-KW"/>
</dbReference>
<dbReference type="GO" id="GO:0005199">
    <property type="term" value="F:structural constituent of cell wall"/>
    <property type="evidence" value="ECO:0000314"/>
    <property type="project" value="SGD"/>
</dbReference>
<dbReference type="GO" id="GO:0031505">
    <property type="term" value="P:fungal-type cell wall organization"/>
    <property type="evidence" value="ECO:0000314"/>
    <property type="project" value="SGD"/>
</dbReference>
<dbReference type="InterPro" id="IPR000420">
    <property type="entry name" value="Yeast_PIR_rpt"/>
</dbReference>
<dbReference type="Pfam" id="PF00399">
    <property type="entry name" value="PIR"/>
    <property type="match status" value="1"/>
</dbReference>
<dbReference type="PROSITE" id="PS00929">
    <property type="entry name" value="PIR_REPEAT_1"/>
    <property type="match status" value="1"/>
</dbReference>
<dbReference type="PROSITE" id="PS50256">
    <property type="entry name" value="PIR_REPEAT_2"/>
    <property type="match status" value="1"/>
</dbReference>
<comment type="function">
    <text>Component of the cell wall.</text>
</comment>
<comment type="subcellular location">
    <subcellularLocation>
        <location>Secreted</location>
        <location>Cell wall</location>
    </subcellularLocation>
    <subcellularLocation>
        <location>Membrane</location>
        <topology>Lipid-anchor</topology>
        <topology>GPI-anchor</topology>
    </subcellularLocation>
    <text>Covalently-linked GPI-modified cell wall protein (GPI-CWP) found in young daughter cells.</text>
</comment>
<comment type="induction">
    <text evidence="4">Down-regulated during anaerobic growth.</text>
</comment>
<comment type="PTM">
    <text evidence="6">Extensively O-glycosylated.</text>
</comment>
<comment type="PTM">
    <text>The GPI-anchor is attached to the protein in the endoplasmic reticulum and serves to target the protein to the cell surface. There, the glucosamine-inositol phospholipid moiety is cleaved off and the GPI-modified mannoprotein is covalently attached via its lipidless GPI glycan remnant to the 1,6-beta-glucan of the outer cell wall layer.</text>
</comment>
<comment type="PTM">
    <text evidence="1">Covalently linked to beta-1,3-glucan of the inner cell wall layer via an alkali-sensitive ester linkage between the gamma-carboxyl group of glutamic acids, arising from a specific glutamine within the PIR1/2/3 repeat, and hydroxyl groups of glucoses of beta-1,3-glucan chains.</text>
</comment>
<comment type="miscellaneous">
    <text evidence="5">Present with 1590000 molecules/cell in log phase SD medium.</text>
</comment>
<comment type="similarity">
    <text evidence="7">Belongs to the SRP1/TIP1 family.</text>
</comment>
<protein>
    <recommendedName>
        <fullName>Cell wall protein CWP2</fullName>
    </recommendedName>
    <alternativeName>
        <fullName>Low pH resistance protein 1</fullName>
    </alternativeName>
</protein>
<reference key="1">
    <citation type="submission" date="1993-09" db="EMBL/GenBank/DDBJ databases">
        <title>Sphingolipids and the LPR1 gene are necessary for maintaining the intracellular pH of Saccharomyces cerevisiae.</title>
        <authorList>
            <person name="Skrzypek M.S."/>
            <person name="Dickson R.C."/>
            <person name="Zingg N.S."/>
            <person name="Lester R.L."/>
            <person name="Shelling J.G."/>
        </authorList>
    </citation>
    <scope>NUCLEOTIDE SEQUENCE [GENOMIC DNA]</scope>
    <source>
        <strain>4R3</strain>
    </source>
</reference>
<reference key="2">
    <citation type="journal article" date="1993" name="Yeast">
        <title>DNA sequence analysis of a 17 kb fragment of yeast chromosome XI physically localizes the MRB1 gene and reveals eight new open reading frames, including a homologue of the KIN1/KIN2 and SNF1 protein kinases.</title>
        <authorList>
            <person name="Pallier C."/>
            <person name="Valens M."/>
            <person name="Puzos V."/>
            <person name="Fukuhara H."/>
            <person name="Cheret G."/>
            <person name="Sor F."/>
            <person name="Bolotin-Fukuhara M."/>
        </authorList>
    </citation>
    <scope>NUCLEOTIDE SEQUENCE [GENOMIC DNA]</scope>
    <source>
        <strain>ATCC 204508 / S288c</strain>
    </source>
</reference>
<reference key="3">
    <citation type="journal article" date="1994" name="Nature">
        <title>Complete DNA sequence of yeast chromosome XI.</title>
        <authorList>
            <person name="Dujon B."/>
            <person name="Alexandraki D."/>
            <person name="Andre B."/>
            <person name="Ansorge W."/>
            <person name="Baladron V."/>
            <person name="Ballesta J.P.G."/>
            <person name="Banrevi A."/>
            <person name="Bolle P.-A."/>
            <person name="Bolotin-Fukuhara M."/>
            <person name="Bossier P."/>
            <person name="Bou G."/>
            <person name="Boyer J."/>
            <person name="Buitrago M.J."/>
            <person name="Cheret G."/>
            <person name="Colleaux L."/>
            <person name="Daignan-Fornier B."/>
            <person name="del Rey F."/>
            <person name="Dion C."/>
            <person name="Domdey H."/>
            <person name="Duesterhoeft A."/>
            <person name="Duesterhus S."/>
            <person name="Entian K.-D."/>
            <person name="Erfle H."/>
            <person name="Esteban P.F."/>
            <person name="Feldmann H."/>
            <person name="Fernandes L."/>
            <person name="Fobo G.M."/>
            <person name="Fritz C."/>
            <person name="Fukuhara H."/>
            <person name="Gabel C."/>
            <person name="Gaillon L."/>
            <person name="Garcia-Cantalejo J.M."/>
            <person name="Garcia-Ramirez J.J."/>
            <person name="Gent M.E."/>
            <person name="Ghazvini M."/>
            <person name="Goffeau A."/>
            <person name="Gonzalez A."/>
            <person name="Grothues D."/>
            <person name="Guerreiro P."/>
            <person name="Hegemann J.H."/>
            <person name="Hewitt N."/>
            <person name="Hilger F."/>
            <person name="Hollenberg C.P."/>
            <person name="Horaitis O."/>
            <person name="Indge K.J."/>
            <person name="Jacquier A."/>
            <person name="James C.M."/>
            <person name="Jauniaux J.-C."/>
            <person name="Jimenez A."/>
            <person name="Keuchel H."/>
            <person name="Kirchrath L."/>
            <person name="Kleine K."/>
            <person name="Koetter P."/>
            <person name="Legrain P."/>
            <person name="Liebl S."/>
            <person name="Louis E.J."/>
            <person name="Maia e Silva A."/>
            <person name="Marck C."/>
            <person name="Monnier A.-L."/>
            <person name="Moestl D."/>
            <person name="Mueller S."/>
            <person name="Obermaier B."/>
            <person name="Oliver S.G."/>
            <person name="Pallier C."/>
            <person name="Pascolo S."/>
            <person name="Pfeiffer F."/>
            <person name="Philippsen P."/>
            <person name="Planta R.J."/>
            <person name="Pohl F.M."/>
            <person name="Pohl T.M."/>
            <person name="Poehlmann R."/>
            <person name="Portetelle D."/>
            <person name="Purnelle B."/>
            <person name="Puzos V."/>
            <person name="Ramezani Rad M."/>
            <person name="Rasmussen S.W."/>
            <person name="Remacha M.A."/>
            <person name="Revuelta J.L."/>
            <person name="Richard G.-F."/>
            <person name="Rieger M."/>
            <person name="Rodrigues-Pousada C."/>
            <person name="Rose M."/>
            <person name="Rupp T."/>
            <person name="Santos M.A."/>
            <person name="Schwager C."/>
            <person name="Sensen C."/>
            <person name="Skala J."/>
            <person name="Soares H."/>
            <person name="Sor F."/>
            <person name="Stegemann J."/>
            <person name="Tettelin H."/>
            <person name="Thierry A."/>
            <person name="Tzermia M."/>
            <person name="Urrestarazu L.A."/>
            <person name="van Dyck L."/>
            <person name="van Vliet-Reedijk J.C."/>
            <person name="Valens M."/>
            <person name="Vandenbol M."/>
            <person name="Vilela C."/>
            <person name="Vissers S."/>
            <person name="von Wettstein D."/>
            <person name="Voss H."/>
            <person name="Wiemann S."/>
            <person name="Xu G."/>
            <person name="Zimmermann J."/>
            <person name="Haasemann M."/>
            <person name="Becker I."/>
            <person name="Mewes H.-W."/>
        </authorList>
    </citation>
    <scope>NUCLEOTIDE SEQUENCE [LARGE SCALE GENOMIC DNA]</scope>
    <source>
        <strain>ATCC 204508 / S288c</strain>
    </source>
</reference>
<reference key="4">
    <citation type="journal article" date="2014" name="G3 (Bethesda)">
        <title>The reference genome sequence of Saccharomyces cerevisiae: Then and now.</title>
        <authorList>
            <person name="Engel S.R."/>
            <person name="Dietrich F.S."/>
            <person name="Fisk D.G."/>
            <person name="Binkley G."/>
            <person name="Balakrishnan R."/>
            <person name="Costanzo M.C."/>
            <person name="Dwight S.S."/>
            <person name="Hitz B.C."/>
            <person name="Karra K."/>
            <person name="Nash R.S."/>
            <person name="Weng S."/>
            <person name="Wong E.D."/>
            <person name="Lloyd P."/>
            <person name="Skrzypek M.S."/>
            <person name="Miyasato S.R."/>
            <person name="Simison M."/>
            <person name="Cherry J.M."/>
        </authorList>
    </citation>
    <scope>GENOME REANNOTATION</scope>
    <source>
        <strain>ATCC 204508 / S288c</strain>
    </source>
</reference>
<reference key="5">
    <citation type="journal article" date="2007" name="Genome Res.">
        <title>Approaching a complete repository of sequence-verified protein-encoding clones for Saccharomyces cerevisiae.</title>
        <authorList>
            <person name="Hu Y."/>
            <person name="Rolfs A."/>
            <person name="Bhullar B."/>
            <person name="Murthy T.V.S."/>
            <person name="Zhu C."/>
            <person name="Berger M.F."/>
            <person name="Camargo A.A."/>
            <person name="Kelley F."/>
            <person name="McCarron S."/>
            <person name="Jepson D."/>
            <person name="Richardson A."/>
            <person name="Raphael J."/>
            <person name="Moreira D."/>
            <person name="Taycher E."/>
            <person name="Zuo D."/>
            <person name="Mohr S."/>
            <person name="Kane M.F."/>
            <person name="Williamson J."/>
            <person name="Simpson A.J.G."/>
            <person name="Bulyk M.L."/>
            <person name="Harlow E."/>
            <person name="Marsischky G."/>
            <person name="Kolodner R.D."/>
            <person name="LaBaer J."/>
        </authorList>
    </citation>
    <scope>NUCLEOTIDE SEQUENCE [GENOMIC DNA]</scope>
    <source>
        <strain>ATCC 204508 / S288c</strain>
    </source>
</reference>
<reference key="6">
    <citation type="journal article" date="1995" name="J. Bacteriol.">
        <title>Identification of three mannoproteins in the cell wall of Saccharomyces cerevisiae.</title>
        <authorList>
            <person name="van der Vaart J.M."/>
            <person name="Caro L.H.P."/>
            <person name="Chapman J.W."/>
            <person name="Klis F.M."/>
            <person name="Verrips C.T."/>
        </authorList>
    </citation>
    <scope>PROTEIN SEQUENCE OF 21-59</scope>
    <scope>GLYCOSYLATION</scope>
    <scope>SUBCELLULAR LOCATION</scope>
</reference>
<reference key="7">
    <citation type="journal article" date="2001" name="J. Bacteriol.">
        <title>Reciprocal regulation of anaerobic and aerobic cell wall mannoprotein gene expression in Saccharomyces cerevisiae.</title>
        <authorList>
            <person name="Abramova N.E."/>
            <person name="Sertil O."/>
            <person name="Mehta S."/>
            <person name="Lowry C.V."/>
        </authorList>
    </citation>
    <scope>INDUCTION</scope>
</reference>
<reference key="8">
    <citation type="journal article" date="2003" name="Mol. Microbiol.">
        <title>The omega-site sequence of glycosylphosphatidylinositol-anchored proteins in Saccharomyces cerevisiae can determine distribution between the membrane and the cell wall.</title>
        <authorList>
            <person name="Frieman M.B."/>
            <person name="Cormack B.P."/>
        </authorList>
    </citation>
    <scope>SUBCELLULAR LOCATION</scope>
</reference>
<reference key="9">
    <citation type="journal article" date="2003" name="Nature">
        <title>Global analysis of protein expression in yeast.</title>
        <authorList>
            <person name="Ghaemmaghami S."/>
            <person name="Huh W.-K."/>
            <person name="Bower K."/>
            <person name="Howson R.W."/>
            <person name="Belle A."/>
            <person name="Dephoure N."/>
            <person name="O'Shea E.K."/>
            <person name="Weissman J.S."/>
        </authorList>
    </citation>
    <scope>LEVEL OF PROTEIN EXPRESSION [LARGE SCALE ANALYSIS]</scope>
</reference>
<reference key="10">
    <citation type="journal article" date="2006" name="Mol. Biol. Cell">
        <title>Role of cell cycle-regulated expression in the localized incorporation of cell wall proteins in yeast.</title>
        <authorList>
            <person name="Smits G.J."/>
            <person name="Schenkman L.R."/>
            <person name="Brul S."/>
            <person name="Pringle J.R."/>
            <person name="Klis F.M."/>
        </authorList>
    </citation>
    <scope>SUBCELLULAR LOCATION</scope>
</reference>
<name>CWP2_YEAST</name>
<organism>
    <name type="scientific">Saccharomyces cerevisiae (strain ATCC 204508 / S288c)</name>
    <name type="common">Baker's yeast</name>
    <dbReference type="NCBI Taxonomy" id="559292"/>
    <lineage>
        <taxon>Eukaryota</taxon>
        <taxon>Fungi</taxon>
        <taxon>Dikarya</taxon>
        <taxon>Ascomycota</taxon>
        <taxon>Saccharomycotina</taxon>
        <taxon>Saccharomycetes</taxon>
        <taxon>Saccharomycetales</taxon>
        <taxon>Saccharomycetaceae</taxon>
        <taxon>Saccharomyces</taxon>
    </lineage>
</organism>
<keyword id="KW-0134">Cell wall</keyword>
<keyword id="KW-0903">Direct protein sequencing</keyword>
<keyword id="KW-0325">Glycoprotein</keyword>
<keyword id="KW-0336">GPI-anchor</keyword>
<keyword id="KW-0449">Lipoprotein</keyword>
<keyword id="KW-0472">Membrane</keyword>
<keyword id="KW-1185">Reference proteome</keyword>
<keyword id="KW-0964">Secreted</keyword>
<keyword id="KW-0732">Signal</keyword>